<feature type="chain" id="PRO_1000146001" description="tRNA N6-adenosine threonylcarbamoyltransferase">
    <location>
        <begin position="1"/>
        <end position="349"/>
    </location>
</feature>
<feature type="binding site" evidence="1">
    <location>
        <position position="111"/>
    </location>
    <ligand>
        <name>Fe cation</name>
        <dbReference type="ChEBI" id="CHEBI:24875"/>
    </ligand>
</feature>
<feature type="binding site" evidence="1">
    <location>
        <position position="115"/>
    </location>
    <ligand>
        <name>Fe cation</name>
        <dbReference type="ChEBI" id="CHEBI:24875"/>
    </ligand>
</feature>
<feature type="binding site" evidence="1">
    <location>
        <begin position="134"/>
        <end position="138"/>
    </location>
    <ligand>
        <name>substrate</name>
    </ligand>
</feature>
<feature type="binding site" evidence="1">
    <location>
        <position position="167"/>
    </location>
    <ligand>
        <name>substrate</name>
    </ligand>
</feature>
<feature type="binding site" evidence="1">
    <location>
        <position position="180"/>
    </location>
    <ligand>
        <name>substrate</name>
    </ligand>
</feature>
<feature type="binding site" evidence="1">
    <location>
        <position position="184"/>
    </location>
    <ligand>
        <name>substrate</name>
    </ligand>
</feature>
<feature type="binding site" evidence="1">
    <location>
        <position position="279"/>
    </location>
    <ligand>
        <name>substrate</name>
    </ligand>
</feature>
<feature type="binding site" evidence="1">
    <location>
        <position position="307"/>
    </location>
    <ligand>
        <name>Fe cation</name>
        <dbReference type="ChEBI" id="CHEBI:24875"/>
    </ligand>
</feature>
<comment type="function">
    <text evidence="1">Required for the formation of a threonylcarbamoyl group on adenosine at position 37 (t(6)A37) in tRNAs that read codons beginning with adenine. Is involved in the transfer of the threonylcarbamoyl moiety of threonylcarbamoyl-AMP (TC-AMP) to the N6 group of A37, together with TsaE and TsaB. TsaD likely plays a direct catalytic role in this reaction.</text>
</comment>
<comment type="catalytic activity">
    <reaction evidence="1">
        <text>L-threonylcarbamoyladenylate + adenosine(37) in tRNA = N(6)-L-threonylcarbamoyladenosine(37) in tRNA + AMP + H(+)</text>
        <dbReference type="Rhea" id="RHEA:37059"/>
        <dbReference type="Rhea" id="RHEA-COMP:10162"/>
        <dbReference type="Rhea" id="RHEA-COMP:10163"/>
        <dbReference type="ChEBI" id="CHEBI:15378"/>
        <dbReference type="ChEBI" id="CHEBI:73682"/>
        <dbReference type="ChEBI" id="CHEBI:74411"/>
        <dbReference type="ChEBI" id="CHEBI:74418"/>
        <dbReference type="ChEBI" id="CHEBI:456215"/>
        <dbReference type="EC" id="2.3.1.234"/>
    </reaction>
</comment>
<comment type="cofactor">
    <cofactor evidence="1">
        <name>Fe(2+)</name>
        <dbReference type="ChEBI" id="CHEBI:29033"/>
    </cofactor>
    <text evidence="1">Binds 1 Fe(2+) ion per subunit.</text>
</comment>
<comment type="subcellular location">
    <subcellularLocation>
        <location evidence="1">Cytoplasm</location>
    </subcellularLocation>
</comment>
<comment type="similarity">
    <text evidence="1">Belongs to the KAE1 / TsaD family.</text>
</comment>
<keyword id="KW-0012">Acyltransferase</keyword>
<keyword id="KW-0963">Cytoplasm</keyword>
<keyword id="KW-0408">Iron</keyword>
<keyword id="KW-0479">Metal-binding</keyword>
<keyword id="KW-1185">Reference proteome</keyword>
<keyword id="KW-0808">Transferase</keyword>
<keyword id="KW-0819">tRNA processing</keyword>
<protein>
    <recommendedName>
        <fullName evidence="1">tRNA N6-adenosine threonylcarbamoyltransferase</fullName>
        <ecNumber evidence="1">2.3.1.234</ecNumber>
    </recommendedName>
    <alternativeName>
        <fullName evidence="1">N6-L-threonylcarbamoyladenine synthase</fullName>
        <shortName evidence="1">t(6)A synthase</shortName>
    </alternativeName>
    <alternativeName>
        <fullName evidence="1">t(6)A37 threonylcarbamoyladenosine biosynthesis protein TsaD</fullName>
    </alternativeName>
    <alternativeName>
        <fullName evidence="1">tRNA threonylcarbamoyladenosine biosynthesis protein TsaD</fullName>
    </alternativeName>
</protein>
<name>TSAD_NOSP7</name>
<sequence>MTTVLAIETSCDETAVAIVNNRKVCSSIVTSQIPVHQQYGGVVPEVASRQHLETINVAIAQALEQAQLDWGQIDAIAATCAPGLLGALLVGLTAAKTLAMVHNKPFLGVHHLEGHIYATYLSESSLNPPFLSLLVSGGHTSLIFVKDCGNYETLGQTRDDAAGEAFDKVARLLKLGYPGGPVIDKLAQQGNPQAFALPEGKVSLPGGGFHRYDASFSGLKTAVLRLVQQLEKDGEQVPVADVAASFQETVARSLTKRAIACALDYGLDTIAIGGGVAANSGLRKNLQAAAVKHNLRVLFPPLKFCTDNAAMIGCAAADHLSHGHTSPLTLGVESRLALTQVMKLYHPLE</sequence>
<evidence type="ECO:0000255" key="1">
    <source>
        <dbReference type="HAMAP-Rule" id="MF_01445"/>
    </source>
</evidence>
<reference key="1">
    <citation type="journal article" date="2013" name="Plant Physiol.">
        <title>A Nostoc punctiforme Sugar Transporter Necessary to Establish a Cyanobacterium-Plant Symbiosis.</title>
        <authorList>
            <person name="Ekman M."/>
            <person name="Picossi S."/>
            <person name="Campbell E.L."/>
            <person name="Meeks J.C."/>
            <person name="Flores E."/>
        </authorList>
    </citation>
    <scope>NUCLEOTIDE SEQUENCE [LARGE SCALE GENOMIC DNA]</scope>
    <source>
        <strain>ATCC 29133 / PCC 73102</strain>
    </source>
</reference>
<organism>
    <name type="scientific">Nostoc punctiforme (strain ATCC 29133 / PCC 73102)</name>
    <dbReference type="NCBI Taxonomy" id="63737"/>
    <lineage>
        <taxon>Bacteria</taxon>
        <taxon>Bacillati</taxon>
        <taxon>Cyanobacteriota</taxon>
        <taxon>Cyanophyceae</taxon>
        <taxon>Nostocales</taxon>
        <taxon>Nostocaceae</taxon>
        <taxon>Nostoc</taxon>
    </lineage>
</organism>
<gene>
    <name evidence="1" type="primary">tsaD</name>
    <name type="synonym">gcp</name>
    <name type="ordered locus">Npun_R3861</name>
</gene>
<accession>B2J588</accession>
<dbReference type="EC" id="2.3.1.234" evidence="1"/>
<dbReference type="EMBL" id="CP001037">
    <property type="protein sequence ID" value="ACC82245.1"/>
    <property type="molecule type" value="Genomic_DNA"/>
</dbReference>
<dbReference type="RefSeq" id="WP_012410216.1">
    <property type="nucleotide sequence ID" value="NC_010628.1"/>
</dbReference>
<dbReference type="SMR" id="B2J588"/>
<dbReference type="STRING" id="63737.Npun_R3861"/>
<dbReference type="EnsemblBacteria" id="ACC82245">
    <property type="protein sequence ID" value="ACC82245"/>
    <property type="gene ID" value="Npun_R3861"/>
</dbReference>
<dbReference type="KEGG" id="npu:Npun_R3861"/>
<dbReference type="eggNOG" id="COG0533">
    <property type="taxonomic scope" value="Bacteria"/>
</dbReference>
<dbReference type="HOGENOM" id="CLU_023208_0_2_3"/>
<dbReference type="OrthoDB" id="9806197at2"/>
<dbReference type="PhylomeDB" id="B2J588"/>
<dbReference type="Proteomes" id="UP000001191">
    <property type="component" value="Chromosome"/>
</dbReference>
<dbReference type="GO" id="GO:0005737">
    <property type="term" value="C:cytoplasm"/>
    <property type="evidence" value="ECO:0007669"/>
    <property type="project" value="UniProtKB-SubCell"/>
</dbReference>
<dbReference type="GO" id="GO:0005506">
    <property type="term" value="F:iron ion binding"/>
    <property type="evidence" value="ECO:0007669"/>
    <property type="project" value="UniProtKB-UniRule"/>
</dbReference>
<dbReference type="GO" id="GO:0061711">
    <property type="term" value="F:N(6)-L-threonylcarbamoyladenine synthase activity"/>
    <property type="evidence" value="ECO:0007669"/>
    <property type="project" value="UniProtKB-EC"/>
</dbReference>
<dbReference type="GO" id="GO:0002949">
    <property type="term" value="P:tRNA threonylcarbamoyladenosine modification"/>
    <property type="evidence" value="ECO:0007669"/>
    <property type="project" value="UniProtKB-UniRule"/>
</dbReference>
<dbReference type="CDD" id="cd24133">
    <property type="entry name" value="ASKHA_NBD_TsaD_bac"/>
    <property type="match status" value="1"/>
</dbReference>
<dbReference type="FunFam" id="3.30.420.40:FF:000012">
    <property type="entry name" value="tRNA N6-adenosine threonylcarbamoyltransferase"/>
    <property type="match status" value="1"/>
</dbReference>
<dbReference type="FunFam" id="3.30.420.40:FF:000040">
    <property type="entry name" value="tRNA N6-adenosine threonylcarbamoyltransferase"/>
    <property type="match status" value="1"/>
</dbReference>
<dbReference type="Gene3D" id="3.30.420.40">
    <property type="match status" value="2"/>
</dbReference>
<dbReference type="HAMAP" id="MF_01445">
    <property type="entry name" value="TsaD"/>
    <property type="match status" value="1"/>
</dbReference>
<dbReference type="InterPro" id="IPR043129">
    <property type="entry name" value="ATPase_NBD"/>
</dbReference>
<dbReference type="InterPro" id="IPR000905">
    <property type="entry name" value="Gcp-like_dom"/>
</dbReference>
<dbReference type="InterPro" id="IPR017861">
    <property type="entry name" value="KAE1/TsaD"/>
</dbReference>
<dbReference type="InterPro" id="IPR017860">
    <property type="entry name" value="Peptidase_M22_CS"/>
</dbReference>
<dbReference type="InterPro" id="IPR022450">
    <property type="entry name" value="TsaD"/>
</dbReference>
<dbReference type="NCBIfam" id="TIGR00329">
    <property type="entry name" value="gcp_kae1"/>
    <property type="match status" value="1"/>
</dbReference>
<dbReference type="NCBIfam" id="TIGR03723">
    <property type="entry name" value="T6A_TsaD_YgjD"/>
    <property type="match status" value="1"/>
</dbReference>
<dbReference type="PANTHER" id="PTHR11735">
    <property type="entry name" value="TRNA N6-ADENOSINE THREONYLCARBAMOYLTRANSFERASE"/>
    <property type="match status" value="1"/>
</dbReference>
<dbReference type="PANTHER" id="PTHR11735:SF6">
    <property type="entry name" value="TRNA N6-ADENOSINE THREONYLCARBAMOYLTRANSFERASE, MITOCHONDRIAL"/>
    <property type="match status" value="1"/>
</dbReference>
<dbReference type="Pfam" id="PF00814">
    <property type="entry name" value="TsaD"/>
    <property type="match status" value="1"/>
</dbReference>
<dbReference type="PRINTS" id="PR00789">
    <property type="entry name" value="OSIALOPTASE"/>
</dbReference>
<dbReference type="SUPFAM" id="SSF53067">
    <property type="entry name" value="Actin-like ATPase domain"/>
    <property type="match status" value="2"/>
</dbReference>
<dbReference type="PROSITE" id="PS01016">
    <property type="entry name" value="GLYCOPROTEASE"/>
    <property type="match status" value="1"/>
</dbReference>
<proteinExistence type="inferred from homology"/>